<reference key="1">
    <citation type="journal article" date="2002" name="Lancet">
        <title>Genome and virulence determinants of high virulence community-acquired MRSA.</title>
        <authorList>
            <person name="Baba T."/>
            <person name="Takeuchi F."/>
            <person name="Kuroda M."/>
            <person name="Yuzawa H."/>
            <person name="Aoki K."/>
            <person name="Oguchi A."/>
            <person name="Nagai Y."/>
            <person name="Iwama N."/>
            <person name="Asano K."/>
            <person name="Naimi T."/>
            <person name="Kuroda H."/>
            <person name="Cui L."/>
            <person name="Yamamoto K."/>
            <person name="Hiramatsu K."/>
        </authorList>
    </citation>
    <scope>NUCLEOTIDE SEQUENCE [LARGE SCALE GENOMIC DNA]</scope>
    <source>
        <strain>MW2</strain>
    </source>
</reference>
<protein>
    <recommendedName>
        <fullName evidence="1">Small ribosomal subunit protein uS17</fullName>
    </recommendedName>
    <alternativeName>
        <fullName evidence="2">30S ribosomal protein S17</fullName>
    </alternativeName>
</protein>
<dbReference type="EMBL" id="BA000033">
    <property type="protein sequence ID" value="BAB96025.1"/>
    <property type="molecule type" value="Genomic_DNA"/>
</dbReference>
<dbReference type="RefSeq" id="WP_000004086.1">
    <property type="nucleotide sequence ID" value="NC_003923.1"/>
</dbReference>
<dbReference type="PDB" id="8Y38">
    <property type="method" value="EM"/>
    <property type="resolution" value="2.58 A"/>
    <property type="chains" value="q=1-87"/>
</dbReference>
<dbReference type="PDB" id="8Y39">
    <property type="method" value="EM"/>
    <property type="resolution" value="3.60 A"/>
    <property type="chains" value="q=1-87"/>
</dbReference>
<dbReference type="PDBsum" id="8Y38"/>
<dbReference type="PDBsum" id="8Y39"/>
<dbReference type="EMDB" id="EMD-38875"/>
<dbReference type="EMDB" id="EMD-38876"/>
<dbReference type="SMR" id="Q8NVB4"/>
<dbReference type="GeneID" id="98346553"/>
<dbReference type="KEGG" id="sam:MW2160"/>
<dbReference type="HOGENOM" id="CLU_073626_1_0_9"/>
<dbReference type="GO" id="GO:0022627">
    <property type="term" value="C:cytosolic small ribosomal subunit"/>
    <property type="evidence" value="ECO:0007669"/>
    <property type="project" value="TreeGrafter"/>
</dbReference>
<dbReference type="GO" id="GO:0019843">
    <property type="term" value="F:rRNA binding"/>
    <property type="evidence" value="ECO:0007669"/>
    <property type="project" value="UniProtKB-UniRule"/>
</dbReference>
<dbReference type="GO" id="GO:0003735">
    <property type="term" value="F:structural constituent of ribosome"/>
    <property type="evidence" value="ECO:0007669"/>
    <property type="project" value="InterPro"/>
</dbReference>
<dbReference type="GO" id="GO:0006412">
    <property type="term" value="P:translation"/>
    <property type="evidence" value="ECO:0007669"/>
    <property type="project" value="UniProtKB-UniRule"/>
</dbReference>
<dbReference type="CDD" id="cd00364">
    <property type="entry name" value="Ribosomal_uS17"/>
    <property type="match status" value="1"/>
</dbReference>
<dbReference type="FunFam" id="2.40.50.140:FF:000026">
    <property type="entry name" value="30S ribosomal protein S17"/>
    <property type="match status" value="1"/>
</dbReference>
<dbReference type="Gene3D" id="2.40.50.140">
    <property type="entry name" value="Nucleic acid-binding proteins"/>
    <property type="match status" value="1"/>
</dbReference>
<dbReference type="HAMAP" id="MF_01345_B">
    <property type="entry name" value="Ribosomal_uS17_B"/>
    <property type="match status" value="1"/>
</dbReference>
<dbReference type="InterPro" id="IPR012340">
    <property type="entry name" value="NA-bd_OB-fold"/>
</dbReference>
<dbReference type="InterPro" id="IPR000266">
    <property type="entry name" value="Ribosomal_uS17"/>
</dbReference>
<dbReference type="InterPro" id="IPR019984">
    <property type="entry name" value="Ribosomal_uS17_bact/chlr"/>
</dbReference>
<dbReference type="InterPro" id="IPR019979">
    <property type="entry name" value="Ribosomal_uS17_CS"/>
</dbReference>
<dbReference type="NCBIfam" id="NF004123">
    <property type="entry name" value="PRK05610.1"/>
    <property type="match status" value="1"/>
</dbReference>
<dbReference type="NCBIfam" id="TIGR03635">
    <property type="entry name" value="uS17_bact"/>
    <property type="match status" value="1"/>
</dbReference>
<dbReference type="PANTHER" id="PTHR10744">
    <property type="entry name" value="40S RIBOSOMAL PROTEIN S11 FAMILY MEMBER"/>
    <property type="match status" value="1"/>
</dbReference>
<dbReference type="PANTHER" id="PTHR10744:SF1">
    <property type="entry name" value="SMALL RIBOSOMAL SUBUNIT PROTEIN US17M"/>
    <property type="match status" value="1"/>
</dbReference>
<dbReference type="Pfam" id="PF00366">
    <property type="entry name" value="Ribosomal_S17"/>
    <property type="match status" value="1"/>
</dbReference>
<dbReference type="PRINTS" id="PR00973">
    <property type="entry name" value="RIBOSOMALS17"/>
</dbReference>
<dbReference type="SUPFAM" id="SSF50249">
    <property type="entry name" value="Nucleic acid-binding proteins"/>
    <property type="match status" value="1"/>
</dbReference>
<dbReference type="PROSITE" id="PS00056">
    <property type="entry name" value="RIBOSOMAL_S17"/>
    <property type="match status" value="1"/>
</dbReference>
<evidence type="ECO:0000255" key="1">
    <source>
        <dbReference type="HAMAP-Rule" id="MF_01345"/>
    </source>
</evidence>
<evidence type="ECO:0000305" key="2"/>
<keyword id="KW-0002">3D-structure</keyword>
<keyword id="KW-0687">Ribonucleoprotein</keyword>
<keyword id="KW-0689">Ribosomal protein</keyword>
<keyword id="KW-0694">RNA-binding</keyword>
<keyword id="KW-0699">rRNA-binding</keyword>
<proteinExistence type="evidence at protein level"/>
<accession>Q8NVB4</accession>
<sequence length="87" mass="10175">MSERNDRKVYVGKVVSDKMDKTITVLVETYKTHKLYGKRVKYSKKYKTHDENNSAKLGDIVKIQETRPLSATKRFRLVEIVEESVII</sequence>
<organism>
    <name type="scientific">Staphylococcus aureus (strain MW2)</name>
    <dbReference type="NCBI Taxonomy" id="196620"/>
    <lineage>
        <taxon>Bacteria</taxon>
        <taxon>Bacillati</taxon>
        <taxon>Bacillota</taxon>
        <taxon>Bacilli</taxon>
        <taxon>Bacillales</taxon>
        <taxon>Staphylococcaceae</taxon>
        <taxon>Staphylococcus</taxon>
    </lineage>
</organism>
<gene>
    <name evidence="1" type="primary">rpsQ</name>
    <name type="ordered locus">MW2160</name>
</gene>
<comment type="function">
    <text evidence="1">One of the primary rRNA binding proteins, it binds specifically to the 5'-end of 16S ribosomal RNA.</text>
</comment>
<comment type="subunit">
    <text evidence="1">Part of the 30S ribosomal subunit.</text>
</comment>
<comment type="similarity">
    <text evidence="1">Belongs to the universal ribosomal protein uS17 family.</text>
</comment>
<name>RS17_STAAW</name>
<feature type="chain" id="PRO_0000128483" description="Small ribosomal subunit protein uS17">
    <location>
        <begin position="1"/>
        <end position="87"/>
    </location>
</feature>